<sequence length="64" mass="7293">MKSTLMTASVLILVLLSIVDYASVYAEFIDSEISLERQWINACFNVCMKISSDKKYCKYLCGKN</sequence>
<name>KKX31_HETPE</name>
<organism>
    <name type="scientific">Heterometrus petersii</name>
    <name type="common">Asian forest scorpion</name>
    <dbReference type="NCBI Taxonomy" id="754296"/>
    <lineage>
        <taxon>Eukaryota</taxon>
        <taxon>Metazoa</taxon>
        <taxon>Ecdysozoa</taxon>
        <taxon>Arthropoda</taxon>
        <taxon>Chelicerata</taxon>
        <taxon>Arachnida</taxon>
        <taxon>Scorpiones</taxon>
        <taxon>Iurida</taxon>
        <taxon>Scorpionoidea</taxon>
        <taxon>Scorpionidae</taxon>
        <taxon>Heterometrinae</taxon>
        <taxon>Heterometrus</taxon>
    </lineage>
</organism>
<evidence type="ECO:0000250" key="1"/>
<evidence type="ECO:0000250" key="2">
    <source>
        <dbReference type="UniProtKB" id="P82850"/>
    </source>
</evidence>
<evidence type="ECO:0000255" key="3"/>
<evidence type="ECO:0000303" key="4">
    <source>
    </source>
</evidence>
<evidence type="ECO:0000303" key="5">
    <source>
    </source>
</evidence>
<evidence type="ECO:0000305" key="6"/>
<protein>
    <recommendedName>
        <fullName evidence="5">Potassium channel toxin kappa-KTx 3.1</fullName>
    </recommendedName>
    <alternativeName>
        <fullName evidence="4">HSP040C.1</fullName>
    </alternativeName>
</protein>
<proteinExistence type="evidence at protein level"/>
<accession>P0DJ36</accession>
<comment type="function">
    <text evidence="1">Potassium channel inhibitor (Kv).</text>
</comment>
<comment type="subcellular location">
    <subcellularLocation>
        <location evidence="1">Secreted</location>
    </subcellularLocation>
</comment>
<comment type="tissue specificity">
    <text evidence="6">Expressed by the venom gland.</text>
</comment>
<comment type="domain">
    <text evidence="2">Has the structural arrangement of two alpha-helices stabilized by disulfide bonds (CSalpha/alpha 2(S-S)).</text>
</comment>
<comment type="similarity">
    <text evidence="6">Belongs to the short scorpion toxin superfamily. Potassium channel inhibitor kappa-KTx family. Kappa-KTx 3 subfamily.</text>
</comment>
<keyword id="KW-1015">Disulfide bond</keyword>
<keyword id="KW-0872">Ion channel impairing toxin</keyword>
<keyword id="KW-0528">Neurotoxin</keyword>
<keyword id="KW-0632">Potassium channel impairing toxin</keyword>
<keyword id="KW-0964">Secreted</keyword>
<keyword id="KW-0732">Signal</keyword>
<keyword id="KW-0800">Toxin</keyword>
<keyword id="KW-1220">Voltage-gated potassium channel impairing toxin</keyword>
<dbReference type="TCDB" id="8.B.2.1.4">
    <property type="family name" value="the short scorpion toxin (s-st) family"/>
</dbReference>
<dbReference type="GO" id="GO:0005576">
    <property type="term" value="C:extracellular region"/>
    <property type="evidence" value="ECO:0007669"/>
    <property type="project" value="UniProtKB-SubCell"/>
</dbReference>
<dbReference type="GO" id="GO:0015459">
    <property type="term" value="F:potassium channel regulator activity"/>
    <property type="evidence" value="ECO:0007669"/>
    <property type="project" value="UniProtKB-KW"/>
</dbReference>
<dbReference type="GO" id="GO:0090729">
    <property type="term" value="F:toxin activity"/>
    <property type="evidence" value="ECO:0007669"/>
    <property type="project" value="UniProtKB-KW"/>
</dbReference>
<feature type="signal peptide" evidence="3">
    <location>
        <begin position="1"/>
        <end position="26"/>
    </location>
</feature>
<feature type="propeptide" id="PRO_0000416802" evidence="1">
    <location>
        <begin position="27"/>
        <end position="36"/>
    </location>
</feature>
<feature type="peptide" id="PRO_0000416803" description="Potassium channel toxin kappa-KTx 3.1">
    <location>
        <begin position="38"/>
        <end position="64"/>
    </location>
</feature>
<feature type="disulfide bond" evidence="2">
    <location>
        <begin position="43"/>
        <end position="61"/>
    </location>
</feature>
<feature type="disulfide bond" evidence="2">
    <location>
        <begin position="47"/>
        <end position="57"/>
    </location>
</feature>
<reference key="1">
    <citation type="journal article" date="2010" name="Proteomics">
        <title>Molecular diversity of toxic components from the scorpion Heterometrus petersii venom revealed by proteomic and transcriptome analysis.</title>
        <authorList>
            <person name="Ma Y."/>
            <person name="Zhao Y."/>
            <person name="Zhao R."/>
            <person name="Zhang W."/>
            <person name="He Y."/>
            <person name="Wu Y."/>
            <person name="Cao Z."/>
            <person name="Guo L."/>
            <person name="Li W."/>
        </authorList>
    </citation>
    <scope>NUCLEOTIDE SEQUENCE [MRNA]</scope>
    <scope>IDENTIFICATION BY MASS SPECTROMETRY</scope>
    <source>
        <tissue>Venom</tissue>
        <tissue>Venom gland</tissue>
    </source>
</reference>
<reference key="2">
    <citation type="journal article" date="2012" name="Biochem. Pharmacol.">
        <title>Purification, molecular cloning and functional characterization of HelaTx1 (Heterometrus laoticus): the first member of a new kappa-KTX subfamily.</title>
        <authorList>
            <person name="Vandendriessche T."/>
            <person name="Kopljar I."/>
            <person name="Jenkins D.P."/>
            <person name="Diego-Garcia E."/>
            <person name="Abdel-Mottaleb Y."/>
            <person name="Vermassen E."/>
            <person name="Clynen E."/>
            <person name="Schoofs L."/>
            <person name="Wulff H."/>
            <person name="Snyders D."/>
            <person name="Tytgat J."/>
        </authorList>
    </citation>
    <scope>NOMENCLATURE</scope>
</reference>